<reference key="1">
    <citation type="journal article" date="2005" name="J. Bacteriol.">
        <title>Genomic sequence of an otitis media isolate of nontypeable Haemophilus influenzae: comparative study with H. influenzae serotype d, strain KW20.</title>
        <authorList>
            <person name="Harrison A."/>
            <person name="Dyer D.W."/>
            <person name="Gillaspy A."/>
            <person name="Ray W.C."/>
            <person name="Mungur R."/>
            <person name="Carson M.B."/>
            <person name="Zhong H."/>
            <person name="Gipson J."/>
            <person name="Gipson M."/>
            <person name="Johnson L.S."/>
            <person name="Lewis L."/>
            <person name="Bakaletz L.O."/>
            <person name="Munson R.S. Jr."/>
        </authorList>
    </citation>
    <scope>NUCLEOTIDE SEQUENCE [LARGE SCALE GENOMIC DNA]</scope>
    <source>
        <strain>86-028NP</strain>
    </source>
</reference>
<feature type="chain" id="PRO_1000137868" description="tRNA(Ile)-lysidine synthase">
    <location>
        <begin position="1"/>
        <end position="430"/>
    </location>
</feature>
<feature type="binding site" evidence="1">
    <location>
        <begin position="24"/>
        <end position="29"/>
    </location>
    <ligand>
        <name>ATP</name>
        <dbReference type="ChEBI" id="CHEBI:30616"/>
    </ligand>
</feature>
<sequence>MDLLSDIEKQLQKATAQGFLIALSGGLDSTVLLSLFAKLCQKQPHLPPLSVRAIHIHHGLSPNADSWAKHCQNLCDQFQIPLIIERVQVDKTNGIEAGAREARYQAIKKHLQIQEMLVTAHHLNDQTETFFLALKRGSGLQGLSAMQQQSVLFGMPIFRPLLGFTRPQLEDYAQQEKLNWVTDESNEDNRYDRNFLRNEILPKLRERWAHFDLAVQRSAQHCFEQQQLINDLLSEIFTEHCQIKNQFKLLQFRQYSLAKQTALLRMWLAKNQLEMPSKRQLTQLINDVIFAKEEANPQFQLVNKVIRRYQDSLYLTKPFSDLTKCTLKLEQNMLNLPDDLGNLTVHENEHNLIFYWQDYSVTLEKTNLPISIRFGYSGKVKHHPKRPREDIKKIWQELSVPPWERNRIPLIFYGNELKSAVGFFRVFDEY</sequence>
<proteinExistence type="inferred from homology"/>
<organism>
    <name type="scientific">Haemophilus influenzae (strain 86-028NP)</name>
    <dbReference type="NCBI Taxonomy" id="281310"/>
    <lineage>
        <taxon>Bacteria</taxon>
        <taxon>Pseudomonadati</taxon>
        <taxon>Pseudomonadota</taxon>
        <taxon>Gammaproteobacteria</taxon>
        <taxon>Pasteurellales</taxon>
        <taxon>Pasteurellaceae</taxon>
        <taxon>Haemophilus</taxon>
    </lineage>
</organism>
<evidence type="ECO:0000255" key="1">
    <source>
        <dbReference type="HAMAP-Rule" id="MF_01161"/>
    </source>
</evidence>
<name>TILS_HAEI8</name>
<comment type="function">
    <text evidence="1">Ligates lysine onto the cytidine present at position 34 of the AUA codon-specific tRNA(Ile) that contains the anticodon CAU, in an ATP-dependent manner. Cytidine is converted to lysidine, thus changing the amino acid specificity of the tRNA from methionine to isoleucine.</text>
</comment>
<comment type="catalytic activity">
    <reaction evidence="1">
        <text>cytidine(34) in tRNA(Ile2) + L-lysine + ATP = lysidine(34) in tRNA(Ile2) + AMP + diphosphate + H(+)</text>
        <dbReference type="Rhea" id="RHEA:43744"/>
        <dbReference type="Rhea" id="RHEA-COMP:10625"/>
        <dbReference type="Rhea" id="RHEA-COMP:10670"/>
        <dbReference type="ChEBI" id="CHEBI:15378"/>
        <dbReference type="ChEBI" id="CHEBI:30616"/>
        <dbReference type="ChEBI" id="CHEBI:32551"/>
        <dbReference type="ChEBI" id="CHEBI:33019"/>
        <dbReference type="ChEBI" id="CHEBI:82748"/>
        <dbReference type="ChEBI" id="CHEBI:83665"/>
        <dbReference type="ChEBI" id="CHEBI:456215"/>
        <dbReference type="EC" id="6.3.4.19"/>
    </reaction>
</comment>
<comment type="subcellular location">
    <subcellularLocation>
        <location evidence="1">Cytoplasm</location>
    </subcellularLocation>
</comment>
<comment type="domain">
    <text>The N-terminal region contains the highly conserved SGGXDS motif, predicted to be a P-loop motif involved in ATP binding.</text>
</comment>
<comment type="similarity">
    <text evidence="1">Belongs to the tRNA(Ile)-lysidine synthase family.</text>
</comment>
<dbReference type="EC" id="6.3.4.19" evidence="1"/>
<dbReference type="EMBL" id="CP000057">
    <property type="protein sequence ID" value="AAX87459.1"/>
    <property type="molecule type" value="Genomic_DNA"/>
</dbReference>
<dbReference type="RefSeq" id="WP_011272029.1">
    <property type="nucleotide sequence ID" value="NC_007146.2"/>
</dbReference>
<dbReference type="SMR" id="Q4QND8"/>
<dbReference type="KEGG" id="hit:NTHI0525"/>
<dbReference type="HOGENOM" id="CLU_018869_2_0_6"/>
<dbReference type="Proteomes" id="UP000002525">
    <property type="component" value="Chromosome"/>
</dbReference>
<dbReference type="GO" id="GO:0005737">
    <property type="term" value="C:cytoplasm"/>
    <property type="evidence" value="ECO:0007669"/>
    <property type="project" value="UniProtKB-SubCell"/>
</dbReference>
<dbReference type="GO" id="GO:0005524">
    <property type="term" value="F:ATP binding"/>
    <property type="evidence" value="ECO:0007669"/>
    <property type="project" value="UniProtKB-UniRule"/>
</dbReference>
<dbReference type="GO" id="GO:0032267">
    <property type="term" value="F:tRNA(Ile)-lysidine synthase activity"/>
    <property type="evidence" value="ECO:0007669"/>
    <property type="project" value="UniProtKB-EC"/>
</dbReference>
<dbReference type="GO" id="GO:0006400">
    <property type="term" value="P:tRNA modification"/>
    <property type="evidence" value="ECO:0007669"/>
    <property type="project" value="UniProtKB-UniRule"/>
</dbReference>
<dbReference type="CDD" id="cd01992">
    <property type="entry name" value="TilS_N"/>
    <property type="match status" value="1"/>
</dbReference>
<dbReference type="Gene3D" id="1.20.59.20">
    <property type="match status" value="1"/>
</dbReference>
<dbReference type="Gene3D" id="3.40.50.620">
    <property type="entry name" value="HUPs"/>
    <property type="match status" value="1"/>
</dbReference>
<dbReference type="HAMAP" id="MF_01161">
    <property type="entry name" value="tRNA_Ile_lys_synt"/>
    <property type="match status" value="1"/>
</dbReference>
<dbReference type="InterPro" id="IPR012796">
    <property type="entry name" value="Lysidine-tRNA-synth_C"/>
</dbReference>
<dbReference type="InterPro" id="IPR014729">
    <property type="entry name" value="Rossmann-like_a/b/a_fold"/>
</dbReference>
<dbReference type="InterPro" id="IPR011063">
    <property type="entry name" value="TilS/TtcA_N"/>
</dbReference>
<dbReference type="InterPro" id="IPR012094">
    <property type="entry name" value="tRNA_Ile_lys_synt"/>
</dbReference>
<dbReference type="InterPro" id="IPR012795">
    <property type="entry name" value="tRNA_Ile_lys_synt_N"/>
</dbReference>
<dbReference type="InterPro" id="IPR015262">
    <property type="entry name" value="tRNA_Ile_lys_synt_subst-bd"/>
</dbReference>
<dbReference type="NCBIfam" id="TIGR02433">
    <property type="entry name" value="lysidine_TilS_C"/>
    <property type="match status" value="1"/>
</dbReference>
<dbReference type="NCBIfam" id="TIGR02432">
    <property type="entry name" value="lysidine_TilS_N"/>
    <property type="match status" value="1"/>
</dbReference>
<dbReference type="PANTHER" id="PTHR43033">
    <property type="entry name" value="TRNA(ILE)-LYSIDINE SYNTHASE-RELATED"/>
    <property type="match status" value="1"/>
</dbReference>
<dbReference type="PANTHER" id="PTHR43033:SF1">
    <property type="entry name" value="TRNA(ILE)-LYSIDINE SYNTHASE-RELATED"/>
    <property type="match status" value="1"/>
</dbReference>
<dbReference type="Pfam" id="PF01171">
    <property type="entry name" value="ATP_bind_3"/>
    <property type="match status" value="1"/>
</dbReference>
<dbReference type="Pfam" id="PF09179">
    <property type="entry name" value="TilS"/>
    <property type="match status" value="1"/>
</dbReference>
<dbReference type="Pfam" id="PF11734">
    <property type="entry name" value="TilS_C"/>
    <property type="match status" value="1"/>
</dbReference>
<dbReference type="SMART" id="SM00977">
    <property type="entry name" value="TilS_C"/>
    <property type="match status" value="1"/>
</dbReference>
<dbReference type="SUPFAM" id="SSF52402">
    <property type="entry name" value="Adenine nucleotide alpha hydrolases-like"/>
    <property type="match status" value="1"/>
</dbReference>
<dbReference type="SUPFAM" id="SSF82829">
    <property type="entry name" value="MesJ substrate recognition domain-like"/>
    <property type="match status" value="1"/>
</dbReference>
<dbReference type="SUPFAM" id="SSF56037">
    <property type="entry name" value="PheT/TilS domain"/>
    <property type="match status" value="1"/>
</dbReference>
<accession>Q4QND8</accession>
<protein>
    <recommendedName>
        <fullName evidence="1">tRNA(Ile)-lysidine synthase</fullName>
        <ecNumber evidence="1">6.3.4.19</ecNumber>
    </recommendedName>
    <alternativeName>
        <fullName evidence="1">tRNA(Ile)-2-lysyl-cytidine synthase</fullName>
    </alternativeName>
    <alternativeName>
        <fullName evidence="1">tRNA(Ile)-lysidine synthetase</fullName>
    </alternativeName>
</protein>
<keyword id="KW-0067">ATP-binding</keyword>
<keyword id="KW-0963">Cytoplasm</keyword>
<keyword id="KW-0436">Ligase</keyword>
<keyword id="KW-0547">Nucleotide-binding</keyword>
<keyword id="KW-0819">tRNA processing</keyword>
<gene>
    <name evidence="1" type="primary">tilS</name>
    <name type="ordered locus">NTHI0525</name>
</gene>